<dbReference type="EMBL" id="AE017223">
    <property type="protein sequence ID" value="AAX73701.1"/>
    <property type="molecule type" value="Genomic_DNA"/>
</dbReference>
<dbReference type="RefSeq" id="WP_002969031.1">
    <property type="nucleotide sequence ID" value="NC_006932.1"/>
</dbReference>
<dbReference type="SMR" id="P0C7V1"/>
<dbReference type="EnsemblBacteria" id="AAX73701">
    <property type="protein sequence ID" value="AAX73701"/>
    <property type="gene ID" value="BruAb1_0298"/>
</dbReference>
<dbReference type="KEGG" id="bmb:BruAb1_0298"/>
<dbReference type="HOGENOM" id="CLU_049215_2_0_5"/>
<dbReference type="Proteomes" id="UP000000540">
    <property type="component" value="Chromosome I"/>
</dbReference>
<dbReference type="GO" id="GO:0005737">
    <property type="term" value="C:cytoplasm"/>
    <property type="evidence" value="ECO:0007669"/>
    <property type="project" value="UniProtKB-SubCell"/>
</dbReference>
<dbReference type="GO" id="GO:0016151">
    <property type="term" value="F:nickel cation binding"/>
    <property type="evidence" value="ECO:0007669"/>
    <property type="project" value="UniProtKB-UniRule"/>
</dbReference>
<dbReference type="Gene3D" id="1.10.4190.10">
    <property type="entry name" value="Urease accessory protein UreF"/>
    <property type="match status" value="1"/>
</dbReference>
<dbReference type="HAMAP" id="MF_01385">
    <property type="entry name" value="UreF"/>
    <property type="match status" value="1"/>
</dbReference>
<dbReference type="InterPro" id="IPR002639">
    <property type="entry name" value="UreF"/>
</dbReference>
<dbReference type="InterPro" id="IPR038277">
    <property type="entry name" value="UreF_sf"/>
</dbReference>
<dbReference type="PANTHER" id="PTHR33620">
    <property type="entry name" value="UREASE ACCESSORY PROTEIN F"/>
    <property type="match status" value="1"/>
</dbReference>
<dbReference type="PANTHER" id="PTHR33620:SF1">
    <property type="entry name" value="UREASE ACCESSORY PROTEIN F"/>
    <property type="match status" value="1"/>
</dbReference>
<dbReference type="Pfam" id="PF01730">
    <property type="entry name" value="UreF"/>
    <property type="match status" value="1"/>
</dbReference>
<dbReference type="PIRSF" id="PIRSF009467">
    <property type="entry name" value="Ureas_acces_UreF"/>
    <property type="match status" value="1"/>
</dbReference>
<accession>P0C7V1</accession>
<accession>Q57F83</accession>
<accession>Q93T79</accession>
<proteinExistence type="inferred from homology"/>
<protein>
    <recommendedName>
        <fullName evidence="1">Urease accessory protein UreF 1</fullName>
    </recommendedName>
</protein>
<keyword id="KW-0143">Chaperone</keyword>
<keyword id="KW-0963">Cytoplasm</keyword>
<keyword id="KW-0996">Nickel insertion</keyword>
<sequence length="228" mass="24450">MTIITPITNDPTTALLRLMAWLSPVFPVGSFSYSHGLERAVHDGLVVDAAGLQDWLQWLVRRGSGWNDAVLCAESWRCAMKGEDLHEIAELAEALAGSRERHMETMLQGGAFFAAARSWPCEIFDRLPPDCAYPVAVGAVAGGHGVPLAQALAAFLQAFCINLLQASIRLSVTGQSGVTAIMAALEPVLGETAARAALSSMEDLGSATFIADIMAMKHETQHSRLFRS</sequence>
<name>UREF1_BRUAB</name>
<comment type="function">
    <text evidence="1">Required for maturation of urease via the functional incorporation of the urease nickel metallocenter.</text>
</comment>
<comment type="subunit">
    <text evidence="1">UreD, UreF and UreG form a complex that acts as a GTP-hydrolysis-dependent molecular chaperone, activating the urease apoprotein by helping to assemble the nickel containing metallocenter of UreC. The UreE protein probably delivers the nickel.</text>
</comment>
<comment type="subcellular location">
    <subcellularLocation>
        <location evidence="1">Cytoplasm</location>
    </subcellularLocation>
</comment>
<comment type="similarity">
    <text evidence="1">Belongs to the UreF family.</text>
</comment>
<feature type="chain" id="PRO_0000344083" description="Urease accessory protein UreF 1">
    <location>
        <begin position="1"/>
        <end position="228"/>
    </location>
</feature>
<organism>
    <name type="scientific">Brucella abortus biovar 1 (strain 9-941)</name>
    <dbReference type="NCBI Taxonomy" id="262698"/>
    <lineage>
        <taxon>Bacteria</taxon>
        <taxon>Pseudomonadati</taxon>
        <taxon>Pseudomonadota</taxon>
        <taxon>Alphaproteobacteria</taxon>
        <taxon>Hyphomicrobiales</taxon>
        <taxon>Brucellaceae</taxon>
        <taxon>Brucella/Ochrobactrum group</taxon>
        <taxon>Brucella</taxon>
    </lineage>
</organism>
<evidence type="ECO:0000255" key="1">
    <source>
        <dbReference type="HAMAP-Rule" id="MF_01385"/>
    </source>
</evidence>
<reference key="1">
    <citation type="journal article" date="2005" name="J. Bacteriol.">
        <title>Completion of the genome sequence of Brucella abortus and comparison to the highly similar genomes of Brucella melitensis and Brucella suis.</title>
        <authorList>
            <person name="Halling S.M."/>
            <person name="Peterson-Burch B.D."/>
            <person name="Bricker B.J."/>
            <person name="Zuerner R.L."/>
            <person name="Qing Z."/>
            <person name="Li L.-L."/>
            <person name="Kapur V."/>
            <person name="Alt D.P."/>
            <person name="Olsen S.C."/>
        </authorList>
    </citation>
    <scope>NUCLEOTIDE SEQUENCE [LARGE SCALE GENOMIC DNA]</scope>
    <source>
        <strain>9-941</strain>
    </source>
</reference>
<gene>
    <name evidence="1" type="primary">ureF1</name>
    <name type="ordered locus">BruAb1_0298</name>
</gene>